<name>SYP_TREPS</name>
<reference key="1">
    <citation type="journal article" date="2008" name="BMC Microbiol.">
        <title>Complete genome sequence of Treponema pallidum ssp. pallidum strain SS14 determined with oligonucleotide arrays.</title>
        <authorList>
            <person name="Matejkova P."/>
            <person name="Strouhal M."/>
            <person name="Smajs D."/>
            <person name="Norris S.J."/>
            <person name="Palzkill T."/>
            <person name="Petrosino J.F."/>
            <person name="Sodergren E."/>
            <person name="Norton J.E."/>
            <person name="Singh J."/>
            <person name="Richmond T.A."/>
            <person name="Molla M.N."/>
            <person name="Albert T.J."/>
            <person name="Weinstock G.M."/>
        </authorList>
    </citation>
    <scope>NUCLEOTIDE SEQUENCE [LARGE SCALE GENOMIC DNA]</scope>
    <source>
        <strain>SS14</strain>
    </source>
</reference>
<evidence type="ECO:0000255" key="1">
    <source>
        <dbReference type="HAMAP-Rule" id="MF_01569"/>
    </source>
</evidence>
<feature type="chain" id="PRO_1000199438" description="Proline--tRNA ligase">
    <location>
        <begin position="1"/>
        <end position="617"/>
    </location>
</feature>
<organism>
    <name type="scientific">Treponema pallidum subsp. pallidum (strain SS14)</name>
    <dbReference type="NCBI Taxonomy" id="455434"/>
    <lineage>
        <taxon>Bacteria</taxon>
        <taxon>Pseudomonadati</taxon>
        <taxon>Spirochaetota</taxon>
        <taxon>Spirochaetia</taxon>
        <taxon>Spirochaetales</taxon>
        <taxon>Treponemataceae</taxon>
        <taxon>Treponema</taxon>
    </lineage>
</organism>
<keyword id="KW-0030">Aminoacyl-tRNA synthetase</keyword>
<keyword id="KW-0067">ATP-binding</keyword>
<keyword id="KW-0963">Cytoplasm</keyword>
<keyword id="KW-0436">Ligase</keyword>
<keyword id="KW-0547">Nucleotide-binding</keyword>
<keyword id="KW-0648">Protein biosynthesis</keyword>
<gene>
    <name evidence="1" type="primary">proS</name>
    <name type="ordered locus">TPASS_0160</name>
</gene>
<comment type="function">
    <text evidence="1">Catalyzes the attachment of proline to tRNA(Pro) in a two-step reaction: proline is first activated by ATP to form Pro-AMP and then transferred to the acceptor end of tRNA(Pro). As ProRS can inadvertently accommodate and process non-cognate amino acids such as alanine and cysteine, to avoid such errors it has two additional distinct editing activities against alanine. One activity is designated as 'pretransfer' editing and involves the tRNA(Pro)-independent hydrolysis of activated Ala-AMP. The other activity is designated 'posttransfer' editing and involves deacylation of mischarged Ala-tRNA(Pro). The misacylated Cys-tRNA(Pro) is not edited by ProRS.</text>
</comment>
<comment type="catalytic activity">
    <reaction evidence="1">
        <text>tRNA(Pro) + L-proline + ATP = L-prolyl-tRNA(Pro) + AMP + diphosphate</text>
        <dbReference type="Rhea" id="RHEA:14305"/>
        <dbReference type="Rhea" id="RHEA-COMP:9700"/>
        <dbReference type="Rhea" id="RHEA-COMP:9702"/>
        <dbReference type="ChEBI" id="CHEBI:30616"/>
        <dbReference type="ChEBI" id="CHEBI:33019"/>
        <dbReference type="ChEBI" id="CHEBI:60039"/>
        <dbReference type="ChEBI" id="CHEBI:78442"/>
        <dbReference type="ChEBI" id="CHEBI:78532"/>
        <dbReference type="ChEBI" id="CHEBI:456215"/>
        <dbReference type="EC" id="6.1.1.15"/>
    </reaction>
</comment>
<comment type="subunit">
    <text evidence="1">Homodimer.</text>
</comment>
<comment type="subcellular location">
    <subcellularLocation>
        <location evidence="1">Cytoplasm</location>
    </subcellularLocation>
</comment>
<comment type="domain">
    <text evidence="1">Consists of three domains: the N-terminal catalytic domain, the editing domain and the C-terminal anticodon-binding domain.</text>
</comment>
<comment type="similarity">
    <text evidence="1">Belongs to the class-II aminoacyl-tRNA synthetase family. ProS type 1 subfamily.</text>
</comment>
<proteinExistence type="inferred from homology"/>
<sequence>MSAFFAPTLRSAPADATIASHQLLMRAGYVRKIANGLFAYLPLGLRVRHKIEAIIREELEAIGCLECTAPVVTPAELWKESGRWYRMGAELLRAKNRLDHELLFSPTAEESFTALVRGDCTSYKHFPLSLYQINAKYRDEIRPRYGLMRAREFTMADAYSFHTDCACLARTYEKFAHAYRAIFRRIGLSVIAVHAHLGAMGGQESEEFMVESAVGDNTLLLCPHCTYAANCEKAVGQRPLPDTHDTHLKDEHEGSDLKTPAAMREVHTPHVKTIEELEHFLHVPAHRCIKTLIYRIDTVPQAAGHFVAVCIRGDLELNESKLEALLRVPSVVLATEQEVYALSGTPVGFIGPVGLAQRAAAAYAARTPAFFPSAAEPASVTSDIPFFSLVADQSVMAMHNAITGALKVDTHLVQVEPGRDFVPDAVADLMLVRAGDRCIHCGAPLYEKKGNELGHLFKLGDKYTRSMHLTFTDEQGVRQFPLMGCYGIGLDRTLASVVENHHDTRGISWPLAISPYAVVLIPIPHTQAPYAAAEALYVQLRTRGVEVLFDDRAERPGVKFADADLIGIPLRVVLSAKTLPRVECTTRCGAHTYFFTQEEASEHIARLLEQLASPESS</sequence>
<accession>B2S2A7</accession>
<protein>
    <recommendedName>
        <fullName evidence="1">Proline--tRNA ligase</fullName>
        <ecNumber evidence="1">6.1.1.15</ecNumber>
    </recommendedName>
    <alternativeName>
        <fullName evidence="1">Prolyl-tRNA synthetase</fullName>
        <shortName evidence="1">ProRS</shortName>
    </alternativeName>
</protein>
<dbReference type="EC" id="6.1.1.15" evidence="1"/>
<dbReference type="EMBL" id="CP000805">
    <property type="protein sequence ID" value="ACD70586.1"/>
    <property type="molecule type" value="Genomic_DNA"/>
</dbReference>
<dbReference type="SMR" id="B2S2A7"/>
<dbReference type="KEGG" id="tpp:TPASS_0160"/>
<dbReference type="PATRIC" id="fig|455434.6.peg.169"/>
<dbReference type="Proteomes" id="UP000001202">
    <property type="component" value="Chromosome"/>
</dbReference>
<dbReference type="GO" id="GO:0005829">
    <property type="term" value="C:cytosol"/>
    <property type="evidence" value="ECO:0007669"/>
    <property type="project" value="TreeGrafter"/>
</dbReference>
<dbReference type="GO" id="GO:0002161">
    <property type="term" value="F:aminoacyl-tRNA deacylase activity"/>
    <property type="evidence" value="ECO:0007669"/>
    <property type="project" value="InterPro"/>
</dbReference>
<dbReference type="GO" id="GO:0005524">
    <property type="term" value="F:ATP binding"/>
    <property type="evidence" value="ECO:0007669"/>
    <property type="project" value="UniProtKB-UniRule"/>
</dbReference>
<dbReference type="GO" id="GO:0004827">
    <property type="term" value="F:proline-tRNA ligase activity"/>
    <property type="evidence" value="ECO:0007669"/>
    <property type="project" value="UniProtKB-UniRule"/>
</dbReference>
<dbReference type="GO" id="GO:0006433">
    <property type="term" value="P:prolyl-tRNA aminoacylation"/>
    <property type="evidence" value="ECO:0007669"/>
    <property type="project" value="UniProtKB-UniRule"/>
</dbReference>
<dbReference type="CDD" id="cd04334">
    <property type="entry name" value="ProRS-INS"/>
    <property type="match status" value="1"/>
</dbReference>
<dbReference type="CDD" id="cd00861">
    <property type="entry name" value="ProRS_anticodon_short"/>
    <property type="match status" value="1"/>
</dbReference>
<dbReference type="CDD" id="cd00779">
    <property type="entry name" value="ProRS_core_prok"/>
    <property type="match status" value="1"/>
</dbReference>
<dbReference type="Gene3D" id="3.40.50.800">
    <property type="entry name" value="Anticodon-binding domain"/>
    <property type="match status" value="1"/>
</dbReference>
<dbReference type="Gene3D" id="3.30.930.10">
    <property type="entry name" value="Bira Bifunctional Protein, Domain 2"/>
    <property type="match status" value="2"/>
</dbReference>
<dbReference type="Gene3D" id="3.90.960.10">
    <property type="entry name" value="YbaK/aminoacyl-tRNA synthetase-associated domain"/>
    <property type="match status" value="1"/>
</dbReference>
<dbReference type="HAMAP" id="MF_01569">
    <property type="entry name" value="Pro_tRNA_synth_type1"/>
    <property type="match status" value="1"/>
</dbReference>
<dbReference type="InterPro" id="IPR002314">
    <property type="entry name" value="aa-tRNA-synt_IIb"/>
</dbReference>
<dbReference type="InterPro" id="IPR006195">
    <property type="entry name" value="aa-tRNA-synth_II"/>
</dbReference>
<dbReference type="InterPro" id="IPR045864">
    <property type="entry name" value="aa-tRNA-synth_II/BPL/LPL"/>
</dbReference>
<dbReference type="InterPro" id="IPR004154">
    <property type="entry name" value="Anticodon-bd"/>
</dbReference>
<dbReference type="InterPro" id="IPR036621">
    <property type="entry name" value="Anticodon-bd_dom_sf"/>
</dbReference>
<dbReference type="InterPro" id="IPR002316">
    <property type="entry name" value="Pro-tRNA-ligase_IIa"/>
</dbReference>
<dbReference type="InterPro" id="IPR004500">
    <property type="entry name" value="Pro-tRNA-synth_IIa_bac-type"/>
</dbReference>
<dbReference type="InterPro" id="IPR023717">
    <property type="entry name" value="Pro-tRNA-Synthase_IIa_type1"/>
</dbReference>
<dbReference type="InterPro" id="IPR050062">
    <property type="entry name" value="Pro-tRNA_synthetase"/>
</dbReference>
<dbReference type="InterPro" id="IPR044140">
    <property type="entry name" value="ProRS_anticodon_short"/>
</dbReference>
<dbReference type="InterPro" id="IPR033730">
    <property type="entry name" value="ProRS_core_prok"/>
</dbReference>
<dbReference type="InterPro" id="IPR036754">
    <property type="entry name" value="YbaK/aa-tRNA-synt-asso_dom_sf"/>
</dbReference>
<dbReference type="InterPro" id="IPR007214">
    <property type="entry name" value="YbaK/aa-tRNA-synth-assoc-dom"/>
</dbReference>
<dbReference type="NCBIfam" id="NF006625">
    <property type="entry name" value="PRK09194.1"/>
    <property type="match status" value="1"/>
</dbReference>
<dbReference type="NCBIfam" id="TIGR00409">
    <property type="entry name" value="proS_fam_II"/>
    <property type="match status" value="1"/>
</dbReference>
<dbReference type="PANTHER" id="PTHR42753">
    <property type="entry name" value="MITOCHONDRIAL RIBOSOME PROTEIN L39/PROLYL-TRNA LIGASE FAMILY MEMBER"/>
    <property type="match status" value="1"/>
</dbReference>
<dbReference type="PANTHER" id="PTHR42753:SF2">
    <property type="entry name" value="PROLINE--TRNA LIGASE"/>
    <property type="match status" value="1"/>
</dbReference>
<dbReference type="Pfam" id="PF03129">
    <property type="entry name" value="HGTP_anticodon"/>
    <property type="match status" value="1"/>
</dbReference>
<dbReference type="Pfam" id="PF00587">
    <property type="entry name" value="tRNA-synt_2b"/>
    <property type="match status" value="1"/>
</dbReference>
<dbReference type="Pfam" id="PF04073">
    <property type="entry name" value="tRNA_edit"/>
    <property type="match status" value="1"/>
</dbReference>
<dbReference type="PRINTS" id="PR01046">
    <property type="entry name" value="TRNASYNTHPRO"/>
</dbReference>
<dbReference type="SUPFAM" id="SSF52954">
    <property type="entry name" value="Class II aaRS ABD-related"/>
    <property type="match status" value="1"/>
</dbReference>
<dbReference type="SUPFAM" id="SSF55681">
    <property type="entry name" value="Class II aaRS and biotin synthetases"/>
    <property type="match status" value="1"/>
</dbReference>
<dbReference type="SUPFAM" id="SSF55826">
    <property type="entry name" value="YbaK/ProRS associated domain"/>
    <property type="match status" value="1"/>
</dbReference>
<dbReference type="PROSITE" id="PS50862">
    <property type="entry name" value="AA_TRNA_LIGASE_II"/>
    <property type="match status" value="1"/>
</dbReference>